<gene>
    <name evidence="1" type="primary">argB</name>
    <name type="ordered locus">SAR11_0465</name>
</gene>
<proteinExistence type="inferred from homology"/>
<accession>Q4FNF2</accession>
<sequence length="288" mass="31886">MSSLREEELINILPKDGPTVEEVKKYLEKYNDEFIIIKCGGSVLVDPKLFKVFIEDVVVLKKLGFNPIIVHGGGKRINSKLLEVNIKSNFINGLRVTDKDTINIVEDVLIEFNKEIVEALNELDCKAKRITSKENNIITVVQENKDLGFVGRPTGINKEFLTEIIKANKVPVIAPLGLDKDNQTFNINADTTAGSIAIELKARRLMIISDVEGVLDSEKKLIPEINSKKANELIDQEVISGGMIPKIKNCLDVASNGVKAVVIIDGRKNHSLLFELLSDKGSGTLIRE</sequence>
<evidence type="ECO:0000255" key="1">
    <source>
        <dbReference type="HAMAP-Rule" id="MF_00082"/>
    </source>
</evidence>
<reference key="1">
    <citation type="journal article" date="2005" name="Science">
        <title>Genome streamlining in a cosmopolitan oceanic bacterium.</title>
        <authorList>
            <person name="Giovannoni S.J."/>
            <person name="Tripp H.J."/>
            <person name="Givan S."/>
            <person name="Podar M."/>
            <person name="Vergin K.L."/>
            <person name="Baptista D."/>
            <person name="Bibbs L."/>
            <person name="Eads J."/>
            <person name="Richardson T.H."/>
            <person name="Noordewier M."/>
            <person name="Rappe M.S."/>
            <person name="Short J.M."/>
            <person name="Carrington J.C."/>
            <person name="Mathur E.J."/>
        </authorList>
    </citation>
    <scope>NUCLEOTIDE SEQUENCE [LARGE SCALE GENOMIC DNA]</scope>
    <source>
        <strain>HTCC1062</strain>
    </source>
</reference>
<dbReference type="EC" id="2.7.2.8" evidence="1"/>
<dbReference type="EMBL" id="CP000084">
    <property type="protein sequence ID" value="AAZ21287.1"/>
    <property type="molecule type" value="Genomic_DNA"/>
</dbReference>
<dbReference type="RefSeq" id="WP_011281731.1">
    <property type="nucleotide sequence ID" value="NC_007205.1"/>
</dbReference>
<dbReference type="SMR" id="Q4FNF2"/>
<dbReference type="STRING" id="335992.SAR11_0465"/>
<dbReference type="GeneID" id="66294964"/>
<dbReference type="KEGG" id="pub:SAR11_0465"/>
<dbReference type="eggNOG" id="COG0548">
    <property type="taxonomic scope" value="Bacteria"/>
</dbReference>
<dbReference type="HOGENOM" id="CLU_053680_0_0_5"/>
<dbReference type="OrthoDB" id="9803155at2"/>
<dbReference type="UniPathway" id="UPA00068">
    <property type="reaction ID" value="UER00107"/>
</dbReference>
<dbReference type="Proteomes" id="UP000002528">
    <property type="component" value="Chromosome"/>
</dbReference>
<dbReference type="GO" id="GO:0005737">
    <property type="term" value="C:cytoplasm"/>
    <property type="evidence" value="ECO:0007669"/>
    <property type="project" value="UniProtKB-SubCell"/>
</dbReference>
<dbReference type="GO" id="GO:0003991">
    <property type="term" value="F:acetylglutamate kinase activity"/>
    <property type="evidence" value="ECO:0007669"/>
    <property type="project" value="UniProtKB-UniRule"/>
</dbReference>
<dbReference type="GO" id="GO:0005524">
    <property type="term" value="F:ATP binding"/>
    <property type="evidence" value="ECO:0007669"/>
    <property type="project" value="UniProtKB-UniRule"/>
</dbReference>
<dbReference type="GO" id="GO:0042450">
    <property type="term" value="P:arginine biosynthetic process via ornithine"/>
    <property type="evidence" value="ECO:0007669"/>
    <property type="project" value="UniProtKB-UniRule"/>
</dbReference>
<dbReference type="GO" id="GO:0006526">
    <property type="term" value="P:L-arginine biosynthetic process"/>
    <property type="evidence" value="ECO:0007669"/>
    <property type="project" value="UniProtKB-UniPathway"/>
</dbReference>
<dbReference type="CDD" id="cd04250">
    <property type="entry name" value="AAK_NAGK-C"/>
    <property type="match status" value="1"/>
</dbReference>
<dbReference type="FunFam" id="3.40.1160.10:FF:000004">
    <property type="entry name" value="Acetylglutamate kinase"/>
    <property type="match status" value="1"/>
</dbReference>
<dbReference type="Gene3D" id="3.40.1160.10">
    <property type="entry name" value="Acetylglutamate kinase-like"/>
    <property type="match status" value="1"/>
</dbReference>
<dbReference type="HAMAP" id="MF_00082">
    <property type="entry name" value="ArgB"/>
    <property type="match status" value="1"/>
</dbReference>
<dbReference type="InterPro" id="IPR036393">
    <property type="entry name" value="AceGlu_kinase-like_sf"/>
</dbReference>
<dbReference type="InterPro" id="IPR004662">
    <property type="entry name" value="AcgluKinase_fam"/>
</dbReference>
<dbReference type="InterPro" id="IPR037528">
    <property type="entry name" value="ArgB"/>
</dbReference>
<dbReference type="InterPro" id="IPR001048">
    <property type="entry name" value="Asp/Glu/Uridylate_kinase"/>
</dbReference>
<dbReference type="InterPro" id="IPR001057">
    <property type="entry name" value="Glu/AcGlu_kinase"/>
</dbReference>
<dbReference type="InterPro" id="IPR041727">
    <property type="entry name" value="NAGK-C"/>
</dbReference>
<dbReference type="NCBIfam" id="TIGR00761">
    <property type="entry name" value="argB"/>
    <property type="match status" value="1"/>
</dbReference>
<dbReference type="PANTHER" id="PTHR23342">
    <property type="entry name" value="N-ACETYLGLUTAMATE SYNTHASE"/>
    <property type="match status" value="1"/>
</dbReference>
<dbReference type="PANTHER" id="PTHR23342:SF0">
    <property type="entry name" value="N-ACETYLGLUTAMATE SYNTHASE, MITOCHONDRIAL"/>
    <property type="match status" value="1"/>
</dbReference>
<dbReference type="Pfam" id="PF00696">
    <property type="entry name" value="AA_kinase"/>
    <property type="match status" value="1"/>
</dbReference>
<dbReference type="PIRSF" id="PIRSF000728">
    <property type="entry name" value="NAGK"/>
    <property type="match status" value="1"/>
</dbReference>
<dbReference type="PRINTS" id="PR00474">
    <property type="entry name" value="GLU5KINASE"/>
</dbReference>
<dbReference type="SUPFAM" id="SSF53633">
    <property type="entry name" value="Carbamate kinase-like"/>
    <property type="match status" value="1"/>
</dbReference>
<feature type="chain" id="PRO_0000264728" description="Acetylglutamate kinase">
    <location>
        <begin position="1"/>
        <end position="288"/>
    </location>
</feature>
<feature type="binding site" evidence="1">
    <location>
        <begin position="73"/>
        <end position="74"/>
    </location>
    <ligand>
        <name>substrate</name>
    </ligand>
</feature>
<feature type="binding site" evidence="1">
    <location>
        <position position="95"/>
    </location>
    <ligand>
        <name>substrate</name>
    </ligand>
</feature>
<feature type="binding site" evidence="1">
    <location>
        <position position="186"/>
    </location>
    <ligand>
        <name>substrate</name>
    </ligand>
</feature>
<feature type="site" description="Transition state stabilizer" evidence="1">
    <location>
        <position position="38"/>
    </location>
</feature>
<feature type="site" description="Transition state stabilizer" evidence="1">
    <location>
        <position position="246"/>
    </location>
</feature>
<name>ARGB_PELUB</name>
<comment type="function">
    <text evidence="1">Catalyzes the ATP-dependent phosphorylation of N-acetyl-L-glutamate.</text>
</comment>
<comment type="catalytic activity">
    <reaction evidence="1">
        <text>N-acetyl-L-glutamate + ATP = N-acetyl-L-glutamyl 5-phosphate + ADP</text>
        <dbReference type="Rhea" id="RHEA:14629"/>
        <dbReference type="ChEBI" id="CHEBI:30616"/>
        <dbReference type="ChEBI" id="CHEBI:44337"/>
        <dbReference type="ChEBI" id="CHEBI:57936"/>
        <dbReference type="ChEBI" id="CHEBI:456216"/>
        <dbReference type="EC" id="2.7.2.8"/>
    </reaction>
</comment>
<comment type="pathway">
    <text evidence="1">Amino-acid biosynthesis; L-arginine biosynthesis; N(2)-acetyl-L-ornithine from L-glutamate: step 2/4.</text>
</comment>
<comment type="subcellular location">
    <subcellularLocation>
        <location evidence="1">Cytoplasm</location>
    </subcellularLocation>
</comment>
<comment type="similarity">
    <text evidence="1">Belongs to the acetylglutamate kinase family. ArgB subfamily.</text>
</comment>
<protein>
    <recommendedName>
        <fullName evidence="1">Acetylglutamate kinase</fullName>
        <ecNumber evidence="1">2.7.2.8</ecNumber>
    </recommendedName>
    <alternativeName>
        <fullName evidence="1">N-acetyl-L-glutamate 5-phosphotransferase</fullName>
    </alternativeName>
    <alternativeName>
        <fullName evidence="1">NAG kinase</fullName>
        <shortName evidence="1">NAGK</shortName>
    </alternativeName>
</protein>
<organism>
    <name type="scientific">Pelagibacter ubique (strain HTCC1062)</name>
    <dbReference type="NCBI Taxonomy" id="335992"/>
    <lineage>
        <taxon>Bacteria</taxon>
        <taxon>Pseudomonadati</taxon>
        <taxon>Pseudomonadota</taxon>
        <taxon>Alphaproteobacteria</taxon>
        <taxon>Candidatus Pelagibacterales</taxon>
        <taxon>Candidatus Pelagibacteraceae</taxon>
        <taxon>Candidatus Pelagibacter</taxon>
    </lineage>
</organism>
<keyword id="KW-0028">Amino-acid biosynthesis</keyword>
<keyword id="KW-0055">Arginine biosynthesis</keyword>
<keyword id="KW-0067">ATP-binding</keyword>
<keyword id="KW-0963">Cytoplasm</keyword>
<keyword id="KW-0418">Kinase</keyword>
<keyword id="KW-0547">Nucleotide-binding</keyword>
<keyword id="KW-1185">Reference proteome</keyword>
<keyword id="KW-0808">Transferase</keyword>